<name>MTND_YERE8</name>
<dbReference type="EC" id="1.13.11.54" evidence="1"/>
<dbReference type="EC" id="1.13.11.53" evidence="1"/>
<dbReference type="EMBL" id="AM286415">
    <property type="protein sequence ID" value="CAL13262.1"/>
    <property type="molecule type" value="Genomic_DNA"/>
</dbReference>
<dbReference type="RefSeq" id="WP_005167484.1">
    <property type="nucleotide sequence ID" value="NC_008800.1"/>
</dbReference>
<dbReference type="RefSeq" id="YP_001007406.1">
    <property type="nucleotide sequence ID" value="NC_008800.1"/>
</dbReference>
<dbReference type="SMR" id="A1JP10"/>
<dbReference type="KEGG" id="yen:YE3231"/>
<dbReference type="PATRIC" id="fig|393305.7.peg.3435"/>
<dbReference type="eggNOG" id="COG1791">
    <property type="taxonomic scope" value="Bacteria"/>
</dbReference>
<dbReference type="HOGENOM" id="CLU_125400_0_0_6"/>
<dbReference type="OrthoDB" id="9795636at2"/>
<dbReference type="UniPathway" id="UPA00904">
    <property type="reaction ID" value="UER00878"/>
</dbReference>
<dbReference type="Proteomes" id="UP000000642">
    <property type="component" value="Chromosome"/>
</dbReference>
<dbReference type="GO" id="GO:0010308">
    <property type="term" value="F:acireductone dioxygenase (Ni2+-requiring) activity"/>
    <property type="evidence" value="ECO:0007669"/>
    <property type="project" value="UniProtKB-UniRule"/>
</dbReference>
<dbReference type="GO" id="GO:0010309">
    <property type="term" value="F:acireductone dioxygenase [iron(II)-requiring] activity"/>
    <property type="evidence" value="ECO:0007669"/>
    <property type="project" value="UniProtKB-UniRule"/>
</dbReference>
<dbReference type="GO" id="GO:0005506">
    <property type="term" value="F:iron ion binding"/>
    <property type="evidence" value="ECO:0007669"/>
    <property type="project" value="UniProtKB-UniRule"/>
</dbReference>
<dbReference type="GO" id="GO:0016151">
    <property type="term" value="F:nickel cation binding"/>
    <property type="evidence" value="ECO:0007669"/>
    <property type="project" value="UniProtKB-UniRule"/>
</dbReference>
<dbReference type="GO" id="GO:0019509">
    <property type="term" value="P:L-methionine salvage from methylthioadenosine"/>
    <property type="evidence" value="ECO:0007669"/>
    <property type="project" value="UniProtKB-UniRule"/>
</dbReference>
<dbReference type="GO" id="GO:0019284">
    <property type="term" value="P:L-methionine salvage from S-adenosylmethionine"/>
    <property type="evidence" value="ECO:0007669"/>
    <property type="project" value="InterPro"/>
</dbReference>
<dbReference type="CDD" id="cd02232">
    <property type="entry name" value="cupin_ARD"/>
    <property type="match status" value="1"/>
</dbReference>
<dbReference type="Gene3D" id="2.60.120.10">
    <property type="entry name" value="Jelly Rolls"/>
    <property type="match status" value="1"/>
</dbReference>
<dbReference type="HAMAP" id="MF_01682">
    <property type="entry name" value="Salvage_MtnD"/>
    <property type="match status" value="1"/>
</dbReference>
<dbReference type="InterPro" id="IPR004313">
    <property type="entry name" value="ARD"/>
</dbReference>
<dbReference type="InterPro" id="IPR023956">
    <property type="entry name" value="ARD_bac"/>
</dbReference>
<dbReference type="InterPro" id="IPR014710">
    <property type="entry name" value="RmlC-like_jellyroll"/>
</dbReference>
<dbReference type="InterPro" id="IPR011051">
    <property type="entry name" value="RmlC_Cupin_sf"/>
</dbReference>
<dbReference type="PANTHER" id="PTHR23418">
    <property type="entry name" value="ACIREDUCTONE DIOXYGENASE"/>
    <property type="match status" value="1"/>
</dbReference>
<dbReference type="PANTHER" id="PTHR23418:SF0">
    <property type="entry name" value="ACIREDUCTONE DIOXYGENASE"/>
    <property type="match status" value="1"/>
</dbReference>
<dbReference type="Pfam" id="PF03079">
    <property type="entry name" value="ARD"/>
    <property type="match status" value="1"/>
</dbReference>
<dbReference type="SUPFAM" id="SSF51182">
    <property type="entry name" value="RmlC-like cupins"/>
    <property type="match status" value="1"/>
</dbReference>
<sequence length="180" mass="20854">MSGLTIFSDEQPEQPLWQSRDAEEIQQQLTAIGVRFERWQADRELGENPQPDAVIAAYQHEIDRLVAEKGYQSWDVISMRPDNEQREVLREKFLSEHTHGEDEVRFFVEGAGLFCLHLNSKIYQILCEKNDLLSVPADTPHWFDMGSKPNFTAIRVFDNPEGWVARFTGDKIADSYPRLD</sequence>
<reference key="1">
    <citation type="journal article" date="2006" name="PLoS Genet.">
        <title>The complete genome sequence and comparative genome analysis of the high pathogenicity Yersinia enterocolitica strain 8081.</title>
        <authorList>
            <person name="Thomson N.R."/>
            <person name="Howard S."/>
            <person name="Wren B.W."/>
            <person name="Holden M.T.G."/>
            <person name="Crossman L."/>
            <person name="Challis G.L."/>
            <person name="Churcher C."/>
            <person name="Mungall K."/>
            <person name="Brooks K."/>
            <person name="Chillingworth T."/>
            <person name="Feltwell T."/>
            <person name="Abdellah Z."/>
            <person name="Hauser H."/>
            <person name="Jagels K."/>
            <person name="Maddison M."/>
            <person name="Moule S."/>
            <person name="Sanders M."/>
            <person name="Whitehead S."/>
            <person name="Quail M.A."/>
            <person name="Dougan G."/>
            <person name="Parkhill J."/>
            <person name="Prentice M.B."/>
        </authorList>
    </citation>
    <scope>NUCLEOTIDE SEQUENCE [LARGE SCALE GENOMIC DNA]</scope>
    <source>
        <strain>NCTC 13174 / 8081</strain>
    </source>
</reference>
<accession>A1JP10</accession>
<gene>
    <name evidence="1" type="primary">mtnD</name>
    <name type="ordered locus">YE3231</name>
</gene>
<proteinExistence type="inferred from homology"/>
<protein>
    <recommendedName>
        <fullName evidence="1">Acireductone dioxygenase</fullName>
    </recommendedName>
    <alternativeName>
        <fullName evidence="1">1,2-dihydroxy-3-keto-5-methylthiopentene dioxygenase</fullName>
        <shortName evidence="1">DHK-MTPene dioxygenase</shortName>
    </alternativeName>
    <alternativeName>
        <fullName evidence="1">Acireductone dioxygenase (Fe(2+)-requiring)</fullName>
        <shortName evidence="1">ARD'</shortName>
        <shortName evidence="1">Fe-ARD</shortName>
        <ecNumber evidence="1">1.13.11.54</ecNumber>
    </alternativeName>
    <alternativeName>
        <fullName evidence="1">Acireductone dioxygenase (Ni(2+)-requiring)</fullName>
        <shortName evidence="1">ARD</shortName>
        <shortName evidence="1">Ni-ARD</shortName>
        <ecNumber evidence="1">1.13.11.53</ecNumber>
    </alternativeName>
</protein>
<organism>
    <name type="scientific">Yersinia enterocolitica serotype O:8 / biotype 1B (strain NCTC 13174 / 8081)</name>
    <dbReference type="NCBI Taxonomy" id="393305"/>
    <lineage>
        <taxon>Bacteria</taxon>
        <taxon>Pseudomonadati</taxon>
        <taxon>Pseudomonadota</taxon>
        <taxon>Gammaproteobacteria</taxon>
        <taxon>Enterobacterales</taxon>
        <taxon>Yersiniaceae</taxon>
        <taxon>Yersinia</taxon>
    </lineage>
</organism>
<comment type="function">
    <text evidence="1">Catalyzes 2 different reactions between oxygen and the acireductone 1,2-dihydroxy-3-keto-5-methylthiopentene (DHK-MTPene) depending upon the metal bound in the active site. Fe-containing acireductone dioxygenase (Fe-ARD) produces formate and 2-keto-4-methylthiobutyrate (KMTB), the alpha-ketoacid precursor of methionine in the methionine recycle pathway. Ni-containing acireductone dioxygenase (Ni-ARD) produces methylthiopropionate, carbon monoxide and formate, and does not lie on the methionine recycle pathway.</text>
</comment>
<comment type="catalytic activity">
    <reaction evidence="1">
        <text>1,2-dihydroxy-5-(methylsulfanyl)pent-1-en-3-one + O2 = 3-(methylsulfanyl)propanoate + CO + formate + 2 H(+)</text>
        <dbReference type="Rhea" id="RHEA:14161"/>
        <dbReference type="ChEBI" id="CHEBI:15378"/>
        <dbReference type="ChEBI" id="CHEBI:15379"/>
        <dbReference type="ChEBI" id="CHEBI:15740"/>
        <dbReference type="ChEBI" id="CHEBI:17245"/>
        <dbReference type="ChEBI" id="CHEBI:49016"/>
        <dbReference type="ChEBI" id="CHEBI:49252"/>
        <dbReference type="EC" id="1.13.11.53"/>
    </reaction>
</comment>
<comment type="catalytic activity">
    <reaction evidence="1">
        <text>1,2-dihydroxy-5-(methylsulfanyl)pent-1-en-3-one + O2 = 4-methylsulfanyl-2-oxobutanoate + formate + 2 H(+)</text>
        <dbReference type="Rhea" id="RHEA:24504"/>
        <dbReference type="ChEBI" id="CHEBI:15378"/>
        <dbReference type="ChEBI" id="CHEBI:15379"/>
        <dbReference type="ChEBI" id="CHEBI:15740"/>
        <dbReference type="ChEBI" id="CHEBI:16723"/>
        <dbReference type="ChEBI" id="CHEBI:49252"/>
        <dbReference type="EC" id="1.13.11.54"/>
    </reaction>
</comment>
<comment type="cofactor">
    <cofactor evidence="1">
        <name>Fe(2+)</name>
        <dbReference type="ChEBI" id="CHEBI:29033"/>
    </cofactor>
    <text evidence="1">Binds 1 Fe(2+) cation per monomer.</text>
</comment>
<comment type="cofactor">
    <cofactor evidence="1">
        <name>Ni(2+)</name>
        <dbReference type="ChEBI" id="CHEBI:49786"/>
    </cofactor>
    <text evidence="1">Binds 1 nickel ion per monomer.</text>
</comment>
<comment type="pathway">
    <text evidence="1">Amino-acid biosynthesis; L-methionine biosynthesis via salvage pathway; L-methionine from S-methyl-5-thio-alpha-D-ribose 1-phosphate: step 5/6.</text>
</comment>
<comment type="subunit">
    <text evidence="1">Monomer.</text>
</comment>
<comment type="similarity">
    <text evidence="1">Belongs to the acireductone dioxygenase (ARD) family.</text>
</comment>
<feature type="chain" id="PRO_0000359258" description="Acireductone dioxygenase">
    <location>
        <begin position="1"/>
        <end position="180"/>
    </location>
</feature>
<feature type="binding site" evidence="1">
    <location>
        <position position="97"/>
    </location>
    <ligand>
        <name>Fe(2+)</name>
        <dbReference type="ChEBI" id="CHEBI:29033"/>
    </ligand>
</feature>
<feature type="binding site" evidence="1">
    <location>
        <position position="97"/>
    </location>
    <ligand>
        <name>Ni(2+)</name>
        <dbReference type="ChEBI" id="CHEBI:49786"/>
    </ligand>
</feature>
<feature type="binding site" evidence="1">
    <location>
        <position position="99"/>
    </location>
    <ligand>
        <name>Fe(2+)</name>
        <dbReference type="ChEBI" id="CHEBI:29033"/>
    </ligand>
</feature>
<feature type="binding site" evidence="1">
    <location>
        <position position="99"/>
    </location>
    <ligand>
        <name>Ni(2+)</name>
        <dbReference type="ChEBI" id="CHEBI:49786"/>
    </ligand>
</feature>
<feature type="binding site" evidence="1">
    <location>
        <position position="103"/>
    </location>
    <ligand>
        <name>Fe(2+)</name>
        <dbReference type="ChEBI" id="CHEBI:29033"/>
    </ligand>
</feature>
<feature type="binding site" evidence="1">
    <location>
        <position position="103"/>
    </location>
    <ligand>
        <name>Ni(2+)</name>
        <dbReference type="ChEBI" id="CHEBI:49786"/>
    </ligand>
</feature>
<feature type="binding site" evidence="1">
    <location>
        <position position="141"/>
    </location>
    <ligand>
        <name>Fe(2+)</name>
        <dbReference type="ChEBI" id="CHEBI:29033"/>
    </ligand>
</feature>
<feature type="binding site" evidence="1">
    <location>
        <position position="141"/>
    </location>
    <ligand>
        <name>Ni(2+)</name>
        <dbReference type="ChEBI" id="CHEBI:49786"/>
    </ligand>
</feature>
<feature type="site" description="May play a role in metal incorporation in vivo" evidence="1">
    <location>
        <position position="96"/>
    </location>
</feature>
<feature type="site" description="May play a role in transmitting local conformational changes" evidence="1">
    <location>
        <position position="102"/>
    </location>
</feature>
<feature type="site" description="Important to generate the dianion" evidence="1">
    <location>
        <position position="105"/>
    </location>
</feature>
<evidence type="ECO:0000255" key="1">
    <source>
        <dbReference type="HAMAP-Rule" id="MF_01682"/>
    </source>
</evidence>
<keyword id="KW-0028">Amino-acid biosynthesis</keyword>
<keyword id="KW-0223">Dioxygenase</keyword>
<keyword id="KW-0408">Iron</keyword>
<keyword id="KW-0479">Metal-binding</keyword>
<keyword id="KW-0486">Methionine biosynthesis</keyword>
<keyword id="KW-0533">Nickel</keyword>
<keyword id="KW-0560">Oxidoreductase</keyword>